<dbReference type="EMBL" id="BX571857">
    <property type="protein sequence ID" value="CAG44415.1"/>
    <property type="molecule type" value="Genomic_DNA"/>
</dbReference>
<dbReference type="RefSeq" id="WP_000240855.1">
    <property type="nucleotide sequence ID" value="NC_002953.3"/>
</dbReference>
<dbReference type="SMR" id="Q6G5W2"/>
<dbReference type="GeneID" id="98347025"/>
<dbReference type="KEGG" id="sas:SAS2596"/>
<dbReference type="HOGENOM" id="CLU_129938_2_0_9"/>
<dbReference type="GO" id="GO:1990904">
    <property type="term" value="C:ribonucleoprotein complex"/>
    <property type="evidence" value="ECO:0007669"/>
    <property type="project" value="UniProtKB-KW"/>
</dbReference>
<dbReference type="GO" id="GO:0005840">
    <property type="term" value="C:ribosome"/>
    <property type="evidence" value="ECO:0007669"/>
    <property type="project" value="UniProtKB-KW"/>
</dbReference>
<dbReference type="GO" id="GO:0003735">
    <property type="term" value="F:structural constituent of ribosome"/>
    <property type="evidence" value="ECO:0007669"/>
    <property type="project" value="InterPro"/>
</dbReference>
<dbReference type="GO" id="GO:0006412">
    <property type="term" value="P:translation"/>
    <property type="evidence" value="ECO:0007669"/>
    <property type="project" value="UniProtKB-UniRule"/>
</dbReference>
<dbReference type="FunFam" id="1.10.287.3980:FF:000001">
    <property type="entry name" value="Mitochondrial ribosomal protein L34"/>
    <property type="match status" value="1"/>
</dbReference>
<dbReference type="Gene3D" id="1.10.287.3980">
    <property type="match status" value="1"/>
</dbReference>
<dbReference type="HAMAP" id="MF_00391">
    <property type="entry name" value="Ribosomal_bL34"/>
    <property type="match status" value="1"/>
</dbReference>
<dbReference type="InterPro" id="IPR000271">
    <property type="entry name" value="Ribosomal_bL34"/>
</dbReference>
<dbReference type="InterPro" id="IPR020939">
    <property type="entry name" value="Ribosomal_bL34_CS"/>
</dbReference>
<dbReference type="NCBIfam" id="TIGR01030">
    <property type="entry name" value="rpmH_bact"/>
    <property type="match status" value="1"/>
</dbReference>
<dbReference type="PANTHER" id="PTHR14503:SF4">
    <property type="entry name" value="LARGE RIBOSOMAL SUBUNIT PROTEIN BL34M"/>
    <property type="match status" value="1"/>
</dbReference>
<dbReference type="PANTHER" id="PTHR14503">
    <property type="entry name" value="MITOCHONDRIAL RIBOSOMAL PROTEIN 34 FAMILY MEMBER"/>
    <property type="match status" value="1"/>
</dbReference>
<dbReference type="Pfam" id="PF00468">
    <property type="entry name" value="Ribosomal_L34"/>
    <property type="match status" value="1"/>
</dbReference>
<dbReference type="PROSITE" id="PS00784">
    <property type="entry name" value="RIBOSOMAL_L34"/>
    <property type="match status" value="1"/>
</dbReference>
<gene>
    <name evidence="1" type="primary">rpmH</name>
    <name type="ordered locus">SAS2596</name>
</gene>
<proteinExistence type="inferred from homology"/>
<sequence>MVKRTYQPNKRKHSKVHGFRKRMSTKNGRKVLARRRRKGRKVLSA</sequence>
<feature type="chain" id="PRO_0000187464" description="Large ribosomal subunit protein bL34">
    <location>
        <begin position="1"/>
        <end position="45"/>
    </location>
</feature>
<feature type="region of interest" description="Disordered" evidence="2">
    <location>
        <begin position="1"/>
        <end position="45"/>
    </location>
</feature>
<organism>
    <name type="scientific">Staphylococcus aureus (strain MSSA476)</name>
    <dbReference type="NCBI Taxonomy" id="282459"/>
    <lineage>
        <taxon>Bacteria</taxon>
        <taxon>Bacillati</taxon>
        <taxon>Bacillota</taxon>
        <taxon>Bacilli</taxon>
        <taxon>Bacillales</taxon>
        <taxon>Staphylococcaceae</taxon>
        <taxon>Staphylococcus</taxon>
    </lineage>
</organism>
<protein>
    <recommendedName>
        <fullName evidence="1">Large ribosomal subunit protein bL34</fullName>
    </recommendedName>
    <alternativeName>
        <fullName evidence="3">50S ribosomal protein L34</fullName>
    </alternativeName>
</protein>
<evidence type="ECO:0000255" key="1">
    <source>
        <dbReference type="HAMAP-Rule" id="MF_00391"/>
    </source>
</evidence>
<evidence type="ECO:0000256" key="2">
    <source>
        <dbReference type="SAM" id="MobiDB-lite"/>
    </source>
</evidence>
<evidence type="ECO:0000305" key="3"/>
<name>RL34_STAAS</name>
<reference key="1">
    <citation type="journal article" date="2004" name="Proc. Natl. Acad. Sci. U.S.A.">
        <title>Complete genomes of two clinical Staphylococcus aureus strains: evidence for the rapid evolution of virulence and drug resistance.</title>
        <authorList>
            <person name="Holden M.T.G."/>
            <person name="Feil E.J."/>
            <person name="Lindsay J.A."/>
            <person name="Peacock S.J."/>
            <person name="Day N.P.J."/>
            <person name="Enright M.C."/>
            <person name="Foster T.J."/>
            <person name="Moore C.E."/>
            <person name="Hurst L."/>
            <person name="Atkin R."/>
            <person name="Barron A."/>
            <person name="Bason N."/>
            <person name="Bentley S.D."/>
            <person name="Chillingworth C."/>
            <person name="Chillingworth T."/>
            <person name="Churcher C."/>
            <person name="Clark L."/>
            <person name="Corton C."/>
            <person name="Cronin A."/>
            <person name="Doggett J."/>
            <person name="Dowd L."/>
            <person name="Feltwell T."/>
            <person name="Hance Z."/>
            <person name="Harris B."/>
            <person name="Hauser H."/>
            <person name="Holroyd S."/>
            <person name="Jagels K."/>
            <person name="James K.D."/>
            <person name="Lennard N."/>
            <person name="Line A."/>
            <person name="Mayes R."/>
            <person name="Moule S."/>
            <person name="Mungall K."/>
            <person name="Ormond D."/>
            <person name="Quail M.A."/>
            <person name="Rabbinowitsch E."/>
            <person name="Rutherford K.M."/>
            <person name="Sanders M."/>
            <person name="Sharp S."/>
            <person name="Simmonds M."/>
            <person name="Stevens K."/>
            <person name="Whitehead S."/>
            <person name="Barrell B.G."/>
            <person name="Spratt B.G."/>
            <person name="Parkhill J."/>
        </authorList>
    </citation>
    <scope>NUCLEOTIDE SEQUENCE [LARGE SCALE GENOMIC DNA]</scope>
    <source>
        <strain>MSSA476</strain>
    </source>
</reference>
<accession>Q6G5W2</accession>
<keyword id="KW-0687">Ribonucleoprotein</keyword>
<keyword id="KW-0689">Ribosomal protein</keyword>
<comment type="similarity">
    <text evidence="1">Belongs to the bacterial ribosomal protein bL34 family.</text>
</comment>